<sequence length="301" mass="33593">MKWLQIHITVDQEQVEFTETLLMSLGAVSVTLDDAEDQALLEPLPGETPLWNKVIVTGIYQQDEQDPIDVDTLEAFLKAQLPDVPMRHEELEDQVWERAWMDYYEPIQIGEKFWIVPEWLEPPEADATNIKLDPGLAFGTGNHASTFLCLQWLGKTDVKDKIVIDYGCGSGILGVAALLLGAKKVYATDIDPQAVLATKQNAELNGVLDRLYVGLPEEFDQEFKPQQADVLVANILAGPLMALAPEFAKLLKSDGDFALAGVIEEQVADVSGVYSEFFDILDVEKREENWCRISGKRKTTN</sequence>
<accession>B7IC17</accession>
<comment type="function">
    <text evidence="1">Methylates ribosomal protein L11.</text>
</comment>
<comment type="catalytic activity">
    <reaction evidence="1">
        <text>L-lysyl-[protein] + 3 S-adenosyl-L-methionine = N(6),N(6),N(6)-trimethyl-L-lysyl-[protein] + 3 S-adenosyl-L-homocysteine + 3 H(+)</text>
        <dbReference type="Rhea" id="RHEA:54192"/>
        <dbReference type="Rhea" id="RHEA-COMP:9752"/>
        <dbReference type="Rhea" id="RHEA-COMP:13826"/>
        <dbReference type="ChEBI" id="CHEBI:15378"/>
        <dbReference type="ChEBI" id="CHEBI:29969"/>
        <dbReference type="ChEBI" id="CHEBI:57856"/>
        <dbReference type="ChEBI" id="CHEBI:59789"/>
        <dbReference type="ChEBI" id="CHEBI:61961"/>
    </reaction>
</comment>
<comment type="subcellular location">
    <subcellularLocation>
        <location evidence="1">Cytoplasm</location>
    </subcellularLocation>
</comment>
<comment type="similarity">
    <text evidence="1">Belongs to the methyltransferase superfamily. PrmA family.</text>
</comment>
<name>PRMA_ACIB5</name>
<reference key="1">
    <citation type="journal article" date="2008" name="J. Bacteriol.">
        <title>Comparative genome sequence analysis of multidrug-resistant Acinetobacter baumannii.</title>
        <authorList>
            <person name="Adams M.D."/>
            <person name="Goglin K."/>
            <person name="Molyneaux N."/>
            <person name="Hujer K.M."/>
            <person name="Lavender H."/>
            <person name="Jamison J.J."/>
            <person name="MacDonald I.J."/>
            <person name="Martin K.M."/>
            <person name="Russo T."/>
            <person name="Campagnari A.A."/>
            <person name="Hujer A.M."/>
            <person name="Bonomo R.A."/>
            <person name="Gill S.R."/>
        </authorList>
    </citation>
    <scope>NUCLEOTIDE SEQUENCE [LARGE SCALE GENOMIC DNA]</scope>
    <source>
        <strain>AB0057</strain>
    </source>
</reference>
<evidence type="ECO:0000255" key="1">
    <source>
        <dbReference type="HAMAP-Rule" id="MF_00735"/>
    </source>
</evidence>
<dbReference type="EC" id="2.1.1.-" evidence="1"/>
<dbReference type="EMBL" id="CP001182">
    <property type="protein sequence ID" value="ACJ42630.1"/>
    <property type="molecule type" value="Genomic_DNA"/>
</dbReference>
<dbReference type="RefSeq" id="WP_000871703.1">
    <property type="nucleotide sequence ID" value="NC_011586.2"/>
</dbReference>
<dbReference type="SMR" id="B7IC17"/>
<dbReference type="GeneID" id="92894424"/>
<dbReference type="KEGG" id="abn:AB57_2522"/>
<dbReference type="HOGENOM" id="CLU_049382_4_1_6"/>
<dbReference type="Proteomes" id="UP000007094">
    <property type="component" value="Chromosome"/>
</dbReference>
<dbReference type="GO" id="GO:0005829">
    <property type="term" value="C:cytosol"/>
    <property type="evidence" value="ECO:0007669"/>
    <property type="project" value="TreeGrafter"/>
</dbReference>
<dbReference type="GO" id="GO:0016279">
    <property type="term" value="F:protein-lysine N-methyltransferase activity"/>
    <property type="evidence" value="ECO:0007669"/>
    <property type="project" value="TreeGrafter"/>
</dbReference>
<dbReference type="GO" id="GO:0032259">
    <property type="term" value="P:methylation"/>
    <property type="evidence" value="ECO:0007669"/>
    <property type="project" value="UniProtKB-KW"/>
</dbReference>
<dbReference type="CDD" id="cd02440">
    <property type="entry name" value="AdoMet_MTases"/>
    <property type="match status" value="1"/>
</dbReference>
<dbReference type="Gene3D" id="3.40.50.150">
    <property type="entry name" value="Vaccinia Virus protein VP39"/>
    <property type="match status" value="1"/>
</dbReference>
<dbReference type="HAMAP" id="MF_00735">
    <property type="entry name" value="Methyltr_PrmA"/>
    <property type="match status" value="1"/>
</dbReference>
<dbReference type="InterPro" id="IPR050078">
    <property type="entry name" value="Ribosomal_L11_MeTrfase_PrmA"/>
</dbReference>
<dbReference type="InterPro" id="IPR004498">
    <property type="entry name" value="Ribosomal_PrmA_MeTrfase"/>
</dbReference>
<dbReference type="InterPro" id="IPR029063">
    <property type="entry name" value="SAM-dependent_MTases_sf"/>
</dbReference>
<dbReference type="NCBIfam" id="TIGR00406">
    <property type="entry name" value="prmA"/>
    <property type="match status" value="1"/>
</dbReference>
<dbReference type="PANTHER" id="PTHR43648">
    <property type="entry name" value="ELECTRON TRANSFER FLAVOPROTEIN BETA SUBUNIT LYSINE METHYLTRANSFERASE"/>
    <property type="match status" value="1"/>
</dbReference>
<dbReference type="PANTHER" id="PTHR43648:SF1">
    <property type="entry name" value="ELECTRON TRANSFER FLAVOPROTEIN BETA SUBUNIT LYSINE METHYLTRANSFERASE"/>
    <property type="match status" value="1"/>
</dbReference>
<dbReference type="Pfam" id="PF06325">
    <property type="entry name" value="PrmA"/>
    <property type="match status" value="1"/>
</dbReference>
<dbReference type="PIRSF" id="PIRSF000401">
    <property type="entry name" value="RPL11_MTase"/>
    <property type="match status" value="1"/>
</dbReference>
<dbReference type="SUPFAM" id="SSF53335">
    <property type="entry name" value="S-adenosyl-L-methionine-dependent methyltransferases"/>
    <property type="match status" value="1"/>
</dbReference>
<gene>
    <name evidence="1" type="primary">prmA</name>
    <name type="ordered locus">AB57_2522</name>
</gene>
<protein>
    <recommendedName>
        <fullName evidence="1">Ribosomal protein L11 methyltransferase</fullName>
        <shortName evidence="1">L11 Mtase</shortName>
        <ecNumber evidence="1">2.1.1.-</ecNumber>
    </recommendedName>
</protein>
<keyword id="KW-0963">Cytoplasm</keyword>
<keyword id="KW-0489">Methyltransferase</keyword>
<keyword id="KW-0949">S-adenosyl-L-methionine</keyword>
<keyword id="KW-0808">Transferase</keyword>
<proteinExistence type="inferred from homology"/>
<organism>
    <name type="scientific">Acinetobacter baumannii (strain AB0057)</name>
    <dbReference type="NCBI Taxonomy" id="480119"/>
    <lineage>
        <taxon>Bacteria</taxon>
        <taxon>Pseudomonadati</taxon>
        <taxon>Pseudomonadota</taxon>
        <taxon>Gammaproteobacteria</taxon>
        <taxon>Moraxellales</taxon>
        <taxon>Moraxellaceae</taxon>
        <taxon>Acinetobacter</taxon>
        <taxon>Acinetobacter calcoaceticus/baumannii complex</taxon>
    </lineage>
</organism>
<feature type="chain" id="PRO_1000192563" description="Ribosomal protein L11 methyltransferase">
    <location>
        <begin position="1"/>
        <end position="301"/>
    </location>
</feature>
<feature type="binding site" evidence="1">
    <location>
        <position position="146"/>
    </location>
    <ligand>
        <name>S-adenosyl-L-methionine</name>
        <dbReference type="ChEBI" id="CHEBI:59789"/>
    </ligand>
</feature>
<feature type="binding site" evidence="1">
    <location>
        <position position="167"/>
    </location>
    <ligand>
        <name>S-adenosyl-L-methionine</name>
        <dbReference type="ChEBI" id="CHEBI:59789"/>
    </ligand>
</feature>
<feature type="binding site" evidence="1">
    <location>
        <position position="189"/>
    </location>
    <ligand>
        <name>S-adenosyl-L-methionine</name>
        <dbReference type="ChEBI" id="CHEBI:59789"/>
    </ligand>
</feature>
<feature type="binding site" evidence="1">
    <location>
        <position position="234"/>
    </location>
    <ligand>
        <name>S-adenosyl-L-methionine</name>
        <dbReference type="ChEBI" id="CHEBI:59789"/>
    </ligand>
</feature>